<reference key="1">
    <citation type="journal article" date="1998" name="Proc. Natl. Acad. Sci. U.S.A.">
        <title>A site-specific recombinase is required for competitive root colonization by Pseudomonas fluorescens WCS365.</title>
        <authorList>
            <person name="Dekkers L.C."/>
            <person name="Phoelich C.C."/>
            <person name="van der Fits L."/>
            <person name="Lugtenberg B.J.J."/>
        </authorList>
    </citation>
    <scope>NUCLEOTIDE SEQUENCE [GENOMIC DNA]</scope>
    <scope>ROOT COLONIZATION</scope>
    <source>
        <strain>WCS365</strain>
    </source>
</reference>
<reference key="2">
    <citation type="journal article" date="2002" name="J. Bacteriol.">
        <title>Phenotypic selection and phase variation occur during alfalfa root colonization by Pseudomonas fluorescens F113.</title>
        <authorList>
            <person name="Sanchez-Contreras M."/>
            <person name="Martin M."/>
            <person name="Villacieros M."/>
            <person name="O'Gara F."/>
            <person name="Bonilla I."/>
            <person name="Rivilla R."/>
        </authorList>
    </citation>
    <scope>NUCLEOTIDE SEQUENCE [GENOMIC DNA]</scope>
    <source>
        <strain>F113</strain>
    </source>
</reference>
<reference key="3">
    <citation type="submission" date="2002-11" db="EMBL/GenBank/DDBJ databases">
        <title>Role of sss recombinase gene in wheat rhizosphere colonization by Pseudomonas fluorescens Q8r1-96.</title>
        <authorList>
            <person name="Mavrodi O.V."/>
            <person name="Mavrodi D.V."/>
            <person name="Weller D.M."/>
            <person name="Thomashow L.S."/>
        </authorList>
    </citation>
    <scope>NUCLEOTIDE SEQUENCE [GENOMIC DNA]</scope>
    <source>
        <strain>Q8r1-96</strain>
    </source>
</reference>
<protein>
    <recommendedName>
        <fullName evidence="1">Tyrosine recombinase XerC</fullName>
    </recommendedName>
</protein>
<sequence>MERQLDAYCEHLRSERQVSPHTLSAYRRDLEKVLGWCQKQNIGSWAALDIQRLRSLIARLHQQGQSSRSLARLLSAVRGLYHYLNREGLCDHDPATGLAPPKGERRLPKTLDTDRALQLLEGAVEDDFLARRDQAILELFYSSGLRLSELTGLNLDQLDLADGMVQVLGKGSKTRLLPVGRKAREALEQWLPLRALTNPADDAVFVSQQGRRLGPRAIQLRVKAAGERELGQNLHPHMLRHSFASHLLESSQDLRAVQELLGHSDIKTTQIYTHLDFQHLATVYDSAHPRAKRIKGDES</sequence>
<accession>Q8VS06</accession>
<accession>O05324</accession>
<proteinExistence type="inferred from homology"/>
<evidence type="ECO:0000255" key="1">
    <source>
        <dbReference type="HAMAP-Rule" id="MF_01808"/>
    </source>
</evidence>
<evidence type="ECO:0000255" key="2">
    <source>
        <dbReference type="PROSITE-ProRule" id="PRU01246"/>
    </source>
</evidence>
<evidence type="ECO:0000255" key="3">
    <source>
        <dbReference type="PROSITE-ProRule" id="PRU01248"/>
    </source>
</evidence>
<evidence type="ECO:0000305" key="4"/>
<organism>
    <name type="scientific">Pseudomonas fluorescens</name>
    <dbReference type="NCBI Taxonomy" id="294"/>
    <lineage>
        <taxon>Bacteria</taxon>
        <taxon>Pseudomonadati</taxon>
        <taxon>Pseudomonadota</taxon>
        <taxon>Gammaproteobacteria</taxon>
        <taxon>Pseudomonadales</taxon>
        <taxon>Pseudomonadaceae</taxon>
        <taxon>Pseudomonas</taxon>
    </lineage>
</organism>
<keyword id="KW-0131">Cell cycle</keyword>
<keyword id="KW-0132">Cell division</keyword>
<keyword id="KW-0159">Chromosome partition</keyword>
<keyword id="KW-0963">Cytoplasm</keyword>
<keyword id="KW-0229">DNA integration</keyword>
<keyword id="KW-0233">DNA recombination</keyword>
<keyword id="KW-0238">DNA-binding</keyword>
<comment type="function">
    <text evidence="1">Site-specific tyrosine recombinase, which acts by catalyzing the cutting and rejoining of the recombining DNA molecules. The XerC-XerD complex is essential to convert dimers of the bacterial chromosome into monomers to permit their segregation at cell division. It also contributes to the segregational stability of plasmids.</text>
</comment>
<comment type="subunit">
    <text evidence="1">Forms a cyclic heterotetrameric complex composed of two molecules of XerC and two molecules of XerD.</text>
</comment>
<comment type="subcellular location">
    <subcellularLocation>
        <location evidence="1">Cytoplasm</location>
    </subcellularLocation>
</comment>
<comment type="similarity">
    <text evidence="1">Belongs to the 'phage' integrase family. XerC subfamily.</text>
</comment>
<dbReference type="EMBL" id="Y12268">
    <property type="protein sequence ID" value="CAA72946.1"/>
    <property type="molecule type" value="Genomic_DNA"/>
</dbReference>
<dbReference type="EMBL" id="AF416734">
    <property type="protein sequence ID" value="AAL73390.1"/>
    <property type="molecule type" value="Genomic_DNA"/>
</dbReference>
<dbReference type="EMBL" id="AY172655">
    <property type="protein sequence ID" value="AAO17715.1"/>
    <property type="molecule type" value="Genomic_DNA"/>
</dbReference>
<dbReference type="PIR" id="T10461">
    <property type="entry name" value="T10461"/>
</dbReference>
<dbReference type="SMR" id="Q8VS06"/>
<dbReference type="PATRIC" id="fig|294.126.peg.1037"/>
<dbReference type="eggNOG" id="COG4973">
    <property type="taxonomic scope" value="Bacteria"/>
</dbReference>
<dbReference type="GO" id="GO:0005737">
    <property type="term" value="C:cytoplasm"/>
    <property type="evidence" value="ECO:0007669"/>
    <property type="project" value="UniProtKB-SubCell"/>
</dbReference>
<dbReference type="GO" id="GO:0003677">
    <property type="term" value="F:DNA binding"/>
    <property type="evidence" value="ECO:0007669"/>
    <property type="project" value="UniProtKB-KW"/>
</dbReference>
<dbReference type="GO" id="GO:0009037">
    <property type="term" value="F:tyrosine-based site-specific recombinase activity"/>
    <property type="evidence" value="ECO:0007669"/>
    <property type="project" value="UniProtKB-UniRule"/>
</dbReference>
<dbReference type="GO" id="GO:0051301">
    <property type="term" value="P:cell division"/>
    <property type="evidence" value="ECO:0007669"/>
    <property type="project" value="UniProtKB-KW"/>
</dbReference>
<dbReference type="GO" id="GO:0007059">
    <property type="term" value="P:chromosome segregation"/>
    <property type="evidence" value="ECO:0007669"/>
    <property type="project" value="UniProtKB-UniRule"/>
</dbReference>
<dbReference type="GO" id="GO:0006313">
    <property type="term" value="P:DNA transposition"/>
    <property type="evidence" value="ECO:0007669"/>
    <property type="project" value="UniProtKB-UniRule"/>
</dbReference>
<dbReference type="CDD" id="cd00798">
    <property type="entry name" value="INT_XerDC_C"/>
    <property type="match status" value="1"/>
</dbReference>
<dbReference type="Gene3D" id="1.10.150.130">
    <property type="match status" value="1"/>
</dbReference>
<dbReference type="Gene3D" id="1.10.443.10">
    <property type="entry name" value="Intergrase catalytic core"/>
    <property type="match status" value="1"/>
</dbReference>
<dbReference type="HAMAP" id="MF_01808">
    <property type="entry name" value="Recomb_XerC_XerD"/>
    <property type="match status" value="1"/>
</dbReference>
<dbReference type="InterPro" id="IPR044068">
    <property type="entry name" value="CB"/>
</dbReference>
<dbReference type="InterPro" id="IPR011010">
    <property type="entry name" value="DNA_brk_join_enz"/>
</dbReference>
<dbReference type="InterPro" id="IPR013762">
    <property type="entry name" value="Integrase-like_cat_sf"/>
</dbReference>
<dbReference type="InterPro" id="IPR002104">
    <property type="entry name" value="Integrase_catalytic"/>
</dbReference>
<dbReference type="InterPro" id="IPR010998">
    <property type="entry name" value="Integrase_recombinase_N"/>
</dbReference>
<dbReference type="InterPro" id="IPR004107">
    <property type="entry name" value="Integrase_SAM-like_N"/>
</dbReference>
<dbReference type="InterPro" id="IPR011931">
    <property type="entry name" value="Recomb_XerC"/>
</dbReference>
<dbReference type="InterPro" id="IPR023009">
    <property type="entry name" value="Tyrosine_recombinase_XerC/XerD"/>
</dbReference>
<dbReference type="InterPro" id="IPR050090">
    <property type="entry name" value="Tyrosine_recombinase_XerCD"/>
</dbReference>
<dbReference type="NCBIfam" id="NF001399">
    <property type="entry name" value="PRK00283.1"/>
    <property type="match status" value="1"/>
</dbReference>
<dbReference type="NCBIfam" id="TIGR02224">
    <property type="entry name" value="recomb_XerC"/>
    <property type="match status" value="1"/>
</dbReference>
<dbReference type="PANTHER" id="PTHR30349">
    <property type="entry name" value="PHAGE INTEGRASE-RELATED"/>
    <property type="match status" value="1"/>
</dbReference>
<dbReference type="PANTHER" id="PTHR30349:SF81">
    <property type="entry name" value="TYROSINE RECOMBINASE XERC"/>
    <property type="match status" value="1"/>
</dbReference>
<dbReference type="Pfam" id="PF02899">
    <property type="entry name" value="Phage_int_SAM_1"/>
    <property type="match status" value="1"/>
</dbReference>
<dbReference type="Pfam" id="PF00589">
    <property type="entry name" value="Phage_integrase"/>
    <property type="match status" value="1"/>
</dbReference>
<dbReference type="SUPFAM" id="SSF56349">
    <property type="entry name" value="DNA breaking-rejoining enzymes"/>
    <property type="match status" value="1"/>
</dbReference>
<dbReference type="SUPFAM" id="SSF47823">
    <property type="entry name" value="lambda integrase-like, N-terminal domain"/>
    <property type="match status" value="1"/>
</dbReference>
<dbReference type="PROSITE" id="PS51900">
    <property type="entry name" value="CB"/>
    <property type="match status" value="1"/>
</dbReference>
<dbReference type="PROSITE" id="PS51898">
    <property type="entry name" value="TYR_RECOMBINASE"/>
    <property type="match status" value="1"/>
</dbReference>
<gene>
    <name evidence="1" type="primary">xerC</name>
    <name type="synonym">sss</name>
</gene>
<feature type="chain" id="PRO_0000095315" description="Tyrosine recombinase XerC">
    <location>
        <begin position="1"/>
        <end position="299"/>
    </location>
</feature>
<feature type="domain" description="Core-binding (CB)" evidence="3">
    <location>
        <begin position="1"/>
        <end position="85"/>
    </location>
</feature>
<feature type="domain" description="Tyr recombinase" evidence="2">
    <location>
        <begin position="106"/>
        <end position="285"/>
    </location>
</feature>
<feature type="active site" evidence="1">
    <location>
        <position position="146"/>
    </location>
</feature>
<feature type="active site" evidence="1">
    <location>
        <position position="170"/>
    </location>
</feature>
<feature type="active site" evidence="1">
    <location>
        <position position="237"/>
    </location>
</feature>
<feature type="active site" evidence="1">
    <location>
        <position position="240"/>
    </location>
</feature>
<feature type="active site" evidence="1">
    <location>
        <position position="263"/>
    </location>
</feature>
<feature type="active site" description="O-(3'-phospho-DNA)-tyrosine intermediate" evidence="1">
    <location>
        <position position="272"/>
    </location>
</feature>
<feature type="sequence conflict" description="In Ref. 2; AAL73390." evidence="4" ref="2">
    <original>L</original>
    <variation>V</variation>
    <location>
        <position position="34"/>
    </location>
</feature>
<feature type="sequence conflict" description="In Ref. 2; AAL73390." evidence="4" ref="2">
    <original>D</original>
    <variation>N</variation>
    <location>
        <position position="112"/>
    </location>
</feature>
<feature type="sequence conflict" description="In Ref. 2; AAL73390." evidence="4" ref="2">
    <original>R</original>
    <variation>Q</variation>
    <location>
        <position position="131"/>
    </location>
</feature>
<feature type="sequence conflict" description="In Ref. 2; AAL73390." evidence="4" ref="2">
    <original>P</original>
    <variation>A</variation>
    <location>
        <position position="192"/>
    </location>
</feature>
<feature type="sequence conflict" description="In Ref. 2; AAL73390." evidence="4" ref="2">
    <original>R</original>
    <variation>K</variation>
    <location>
        <position position="211"/>
    </location>
</feature>
<feature type="sequence conflict" description="In Ref. 2; AAL73390." evidence="4" ref="2">
    <location>
        <position position="240"/>
    </location>
</feature>
<name>XERC_PSEFL</name>